<evidence type="ECO:0000305" key="1"/>
<feature type="peptide" id="PRO_0000044743" description="Glucagon-2">
    <location>
        <begin position="1"/>
        <end position="33"/>
    </location>
</feature>
<proteinExistence type="evidence at protein level"/>
<accession>P81027</accession>
<dbReference type="SMR" id="P81027"/>
<dbReference type="eggNOG" id="ENOG502RYPR">
    <property type="taxonomic scope" value="Eukaryota"/>
</dbReference>
<dbReference type="HOGENOM" id="CLU_090687_2_0_1"/>
<dbReference type="InParanoid" id="P81027"/>
<dbReference type="Proteomes" id="UP000005207">
    <property type="component" value="Unplaced"/>
</dbReference>
<dbReference type="GO" id="GO:0005576">
    <property type="term" value="C:extracellular region"/>
    <property type="evidence" value="ECO:0007669"/>
    <property type="project" value="UniProtKB-SubCell"/>
</dbReference>
<dbReference type="GO" id="GO:0031769">
    <property type="term" value="F:glucagon receptor binding"/>
    <property type="evidence" value="ECO:0007669"/>
    <property type="project" value="TreeGrafter"/>
</dbReference>
<dbReference type="GO" id="GO:0005179">
    <property type="term" value="F:hormone activity"/>
    <property type="evidence" value="ECO:0007669"/>
    <property type="project" value="UniProtKB-KW"/>
</dbReference>
<dbReference type="GO" id="GO:0042594">
    <property type="term" value="P:response to starvation"/>
    <property type="evidence" value="ECO:0007669"/>
    <property type="project" value="TreeGrafter"/>
</dbReference>
<dbReference type="Gene3D" id="6.10.250.590">
    <property type="match status" value="1"/>
</dbReference>
<dbReference type="InterPro" id="IPR015550">
    <property type="entry name" value="Glucagon"/>
</dbReference>
<dbReference type="InterPro" id="IPR000532">
    <property type="entry name" value="Glucagon_GIP_secretin_VIP"/>
</dbReference>
<dbReference type="PANTHER" id="PTHR11418">
    <property type="entry name" value="GLUCAGON"/>
    <property type="match status" value="1"/>
</dbReference>
<dbReference type="PANTHER" id="PTHR11418:SF0">
    <property type="entry name" value="PRO-GLUCAGON"/>
    <property type="match status" value="1"/>
</dbReference>
<dbReference type="Pfam" id="PF00123">
    <property type="entry name" value="Hormone_2"/>
    <property type="match status" value="1"/>
</dbReference>
<dbReference type="SMART" id="SM00070">
    <property type="entry name" value="GLUCA"/>
    <property type="match status" value="1"/>
</dbReference>
<sequence length="33" mass="3731">HAGTYTSDVSSYLQDQAAKEFVSWLKTGRGRRD</sequence>
<keyword id="KW-0903">Direct protein sequencing</keyword>
<keyword id="KW-0372">Hormone</keyword>
<keyword id="KW-1185">Reference proteome</keyword>
<keyword id="KW-0964">Secreted</keyword>
<gene>
    <name type="primary">gcg2</name>
</gene>
<comment type="function">
    <text>Promotes hydrolysis of glycogen and lipids, and raises the blood sugar level.</text>
</comment>
<comment type="subcellular location">
    <subcellularLocation>
        <location>Secreted</location>
    </subcellularLocation>
</comment>
<comment type="induction">
    <text>Produced in the A cells of the islets of Langerhans in response to a drop in blood sugar concentration.</text>
</comment>
<comment type="similarity">
    <text evidence="1">Belongs to the glucagon family.</text>
</comment>
<protein>
    <recommendedName>
        <fullName>Glucagon-2</fullName>
    </recommendedName>
    <alternativeName>
        <fullName>Glucagon II</fullName>
    </alternativeName>
</protein>
<name>GLUC2_ORENI</name>
<organism>
    <name type="scientific">Oreochromis niloticus</name>
    <name type="common">Nile tilapia</name>
    <name type="synonym">Tilapia nilotica</name>
    <dbReference type="NCBI Taxonomy" id="8128"/>
    <lineage>
        <taxon>Eukaryota</taxon>
        <taxon>Metazoa</taxon>
        <taxon>Chordata</taxon>
        <taxon>Craniata</taxon>
        <taxon>Vertebrata</taxon>
        <taxon>Euteleostomi</taxon>
        <taxon>Actinopterygii</taxon>
        <taxon>Neopterygii</taxon>
        <taxon>Teleostei</taxon>
        <taxon>Neoteleostei</taxon>
        <taxon>Acanthomorphata</taxon>
        <taxon>Ovalentaria</taxon>
        <taxon>Cichlomorphae</taxon>
        <taxon>Cichliformes</taxon>
        <taxon>Cichlidae</taxon>
        <taxon>African cichlids</taxon>
        <taxon>Pseudocrenilabrinae</taxon>
        <taxon>Oreochromini</taxon>
        <taxon>Oreochromis</taxon>
    </lineage>
</organism>
<reference key="1">
    <citation type="journal article" date="1995" name="Comp. Biochem. Physiol.">
        <title>Characterization of the pancreatic hormones from the Brockmann body of the tilapia: implications for islet xenograft studies.</title>
        <authorList>
            <person name="Nguyen T.M."/>
            <person name="Wright J.R. Jr."/>
            <person name="Nielsen P.F."/>
            <person name="Conlon J.M."/>
        </authorList>
    </citation>
    <scope>PROTEIN SEQUENCE</scope>
</reference>